<sequence>MNLLPSNPHGNGLLYAGFNQDHGCFACGMENGFRVYNTDPLKEKEKQEFLEGGVGYVEMLFRCNYLALVGGGKKPKYPPNKVMIWDDLKKKTVIEIEFSTEVKAVKLRRDRIVVVLDSMIKVFTFTHNPHQLHVFETCYNPKGLCVLCPNSNNSLLAFPGAHTGHVQIVDLASTEKPPVDIPAHEGILSCIALNLQGTRIATASEKGTLIRIFDTSSGHLIQELRRGSQAANIYCINFNEDASLICVSSDHGTVHIFAAEDPKRNKQSSLASASFLPKYFSSKWSFSKFQVPSGSPCVCAFGTEPNSVIAICADGSYYKFQFNPKGECTRDVYAQFLEMTDDKL</sequence>
<name>WIPI3_XENTR</name>
<proteinExistence type="evidence at transcript level"/>
<dbReference type="EMBL" id="CR762340">
    <property type="protein sequence ID" value="CAJ83804.1"/>
    <property type="molecule type" value="mRNA"/>
</dbReference>
<dbReference type="EMBL" id="BC082507">
    <property type="protein sequence ID" value="AAH82507.1"/>
    <property type="molecule type" value="mRNA"/>
</dbReference>
<dbReference type="RefSeq" id="NP_001008184.1">
    <property type="nucleotide sequence ID" value="NM_001008183.1"/>
</dbReference>
<dbReference type="SMR" id="Q640T2"/>
<dbReference type="FunCoup" id="Q640T2">
    <property type="interactions" value="3421"/>
</dbReference>
<dbReference type="STRING" id="8364.ENSXETP00000022455"/>
<dbReference type="PaxDb" id="8364-ENSXETP00000049343"/>
<dbReference type="DNASU" id="493546"/>
<dbReference type="GeneID" id="493546"/>
<dbReference type="KEGG" id="xtr:493546"/>
<dbReference type="AGR" id="Xenbase:XB-GENE-1009828"/>
<dbReference type="CTD" id="56270"/>
<dbReference type="Xenbase" id="XB-GENE-1009828">
    <property type="gene designation" value="wdr45b"/>
</dbReference>
<dbReference type="eggNOG" id="KOG2111">
    <property type="taxonomic scope" value="Eukaryota"/>
</dbReference>
<dbReference type="HOGENOM" id="CLU_025895_2_2_1"/>
<dbReference type="InParanoid" id="Q640T2"/>
<dbReference type="OMA" id="GGPQCMC"/>
<dbReference type="OrthoDB" id="1667587at2759"/>
<dbReference type="PhylomeDB" id="Q640T2"/>
<dbReference type="TreeFam" id="TF314859"/>
<dbReference type="Reactome" id="R-XTR-1632852">
    <property type="pathway name" value="Macroautophagy"/>
</dbReference>
<dbReference type="Proteomes" id="UP000008143">
    <property type="component" value="Chromosome 10"/>
</dbReference>
<dbReference type="Bgee" id="ENSXETG00000022804">
    <property type="expression patterns" value="Expressed in 2-cell stage embryo and 14 other cell types or tissues"/>
</dbReference>
<dbReference type="GO" id="GO:0005764">
    <property type="term" value="C:lysosome"/>
    <property type="evidence" value="ECO:0000250"/>
    <property type="project" value="UniProtKB"/>
</dbReference>
<dbReference type="GO" id="GO:0000407">
    <property type="term" value="C:phagophore assembly site"/>
    <property type="evidence" value="ECO:0000250"/>
    <property type="project" value="UniProtKB"/>
</dbReference>
<dbReference type="GO" id="GO:0080025">
    <property type="term" value="F:phosphatidylinositol-3,5-bisphosphate binding"/>
    <property type="evidence" value="ECO:0000250"/>
    <property type="project" value="UniProtKB"/>
</dbReference>
<dbReference type="GO" id="GO:0032266">
    <property type="term" value="F:phosphatidylinositol-3-phosphate binding"/>
    <property type="evidence" value="ECO:0000250"/>
    <property type="project" value="UniProtKB"/>
</dbReference>
<dbReference type="GO" id="GO:0000045">
    <property type="term" value="P:autophagosome assembly"/>
    <property type="evidence" value="ECO:0000250"/>
    <property type="project" value="UniProtKB"/>
</dbReference>
<dbReference type="GO" id="GO:0009267">
    <property type="term" value="P:cellular response to starvation"/>
    <property type="evidence" value="ECO:0000250"/>
    <property type="project" value="UniProtKB"/>
</dbReference>
<dbReference type="FunFam" id="2.130.10.10:FF:000083">
    <property type="entry name" value="WD repeat domain phosphoinositide-interacting protein 3"/>
    <property type="match status" value="1"/>
</dbReference>
<dbReference type="Gene3D" id="2.130.10.10">
    <property type="entry name" value="YVTN repeat-like/Quinoprotein amine dehydrogenase"/>
    <property type="match status" value="1"/>
</dbReference>
<dbReference type="InterPro" id="IPR048720">
    <property type="entry name" value="PROPPIN"/>
</dbReference>
<dbReference type="InterPro" id="IPR015943">
    <property type="entry name" value="WD40/YVTN_repeat-like_dom_sf"/>
</dbReference>
<dbReference type="InterPro" id="IPR036322">
    <property type="entry name" value="WD40_repeat_dom_sf"/>
</dbReference>
<dbReference type="InterPro" id="IPR001680">
    <property type="entry name" value="WD40_rpt"/>
</dbReference>
<dbReference type="PANTHER" id="PTHR11227">
    <property type="entry name" value="WD-REPEAT PROTEIN INTERACTING WITH PHOSPHOINOSIDES WIPI -RELATED"/>
    <property type="match status" value="1"/>
</dbReference>
<dbReference type="Pfam" id="PF21032">
    <property type="entry name" value="PROPPIN"/>
    <property type="match status" value="1"/>
</dbReference>
<dbReference type="SMART" id="SM00320">
    <property type="entry name" value="WD40"/>
    <property type="match status" value="2"/>
</dbReference>
<dbReference type="SUPFAM" id="SSF50978">
    <property type="entry name" value="WD40 repeat-like"/>
    <property type="match status" value="1"/>
</dbReference>
<feature type="chain" id="PRO_0000051451" description="WD repeat domain phosphoinositide-interacting protein 3">
    <location>
        <begin position="1"/>
        <end position="344"/>
    </location>
</feature>
<feature type="repeat" description="WD 1">
    <location>
        <begin position="183"/>
        <end position="223"/>
    </location>
</feature>
<feature type="repeat" description="WD 2">
    <location>
        <begin position="228"/>
        <end position="267"/>
    </location>
</feature>
<feature type="short sequence motif" description="L/FRRG motif" evidence="2">
    <location>
        <begin position="224"/>
        <end position="227"/>
    </location>
</feature>
<protein>
    <recommendedName>
        <fullName>WD repeat domain phosphoinositide-interacting protein 3</fullName>
        <shortName>WIPI-3</shortName>
    </recommendedName>
    <alternativeName>
        <fullName>WD repeat-containing protein 45-like</fullName>
        <shortName>WDR45-like protein</shortName>
    </alternativeName>
    <alternativeName>
        <fullName>WD repeat-containing protein 45B</fullName>
    </alternativeName>
</protein>
<keyword id="KW-0072">Autophagy</keyword>
<keyword id="KW-0446">Lipid-binding</keyword>
<keyword id="KW-0458">Lysosome</keyword>
<keyword id="KW-1185">Reference proteome</keyword>
<keyword id="KW-0677">Repeat</keyword>
<keyword id="KW-0853">WD repeat</keyword>
<reference key="1">
    <citation type="submission" date="2006-03" db="EMBL/GenBank/DDBJ databases">
        <authorList>
            <consortium name="Sanger Xenopus tropicalis EST/cDNA project"/>
        </authorList>
    </citation>
    <scope>NUCLEOTIDE SEQUENCE [LARGE SCALE MRNA]</scope>
    <source>
        <tissue>Gastrula</tissue>
    </source>
</reference>
<reference key="2">
    <citation type="submission" date="2004-09" db="EMBL/GenBank/DDBJ databases">
        <authorList>
            <consortium name="NIH - Xenopus Gene Collection (XGC) project"/>
        </authorList>
    </citation>
    <scope>NUCLEOTIDE SEQUENCE [LARGE SCALE MRNA]</scope>
    <source>
        <tissue>Embryo</tissue>
    </source>
</reference>
<organism>
    <name type="scientific">Xenopus tropicalis</name>
    <name type="common">Western clawed frog</name>
    <name type="synonym">Silurana tropicalis</name>
    <dbReference type="NCBI Taxonomy" id="8364"/>
    <lineage>
        <taxon>Eukaryota</taxon>
        <taxon>Metazoa</taxon>
        <taxon>Chordata</taxon>
        <taxon>Craniata</taxon>
        <taxon>Vertebrata</taxon>
        <taxon>Euteleostomi</taxon>
        <taxon>Amphibia</taxon>
        <taxon>Batrachia</taxon>
        <taxon>Anura</taxon>
        <taxon>Pipoidea</taxon>
        <taxon>Pipidae</taxon>
        <taxon>Xenopodinae</taxon>
        <taxon>Xenopus</taxon>
        <taxon>Silurana</taxon>
    </lineage>
</organism>
<gene>
    <name type="primary">wdr45b</name>
    <name type="synonym">wdr45l</name>
    <name type="synonym">wipi3</name>
    <name type="ORF">TGas091f07.1</name>
</gene>
<comment type="function">
    <text evidence="1">Component of the autophagy machinery that controls the major intracellular degradation process by which cytoplasmic materials are packaged into autophagosomes and delivered to lysosomes for degradation. Binds phosphatidylinositol 3-phosphate (PtdIns3P), and other phosphoinositides including PtdIns(3,5)P2, forming on membranes of the endoplasmic reticulum upon activation of the upstream ULK1 and PI3 kinases and is recruited at phagophore assembly sites where it regulates the elongation of nascent phagophores downstream of WIPI2.</text>
</comment>
<comment type="subcellular location">
    <subcellularLocation>
        <location evidence="1">Preautophagosomal structure</location>
    </subcellularLocation>
    <subcellularLocation>
        <location evidence="1">Lysosome</location>
    </subcellularLocation>
</comment>
<comment type="domain">
    <text evidence="2">The L/FRRG motif is required for recruitment to PtdIns3P.</text>
</comment>
<comment type="similarity">
    <text evidence="3">Belongs to the WD repeat PROPPIN family.</text>
</comment>
<accession>Q640T2</accession>
<accession>Q28EU4</accession>
<evidence type="ECO:0000250" key="1">
    <source>
        <dbReference type="UniProtKB" id="Q5MNZ6"/>
    </source>
</evidence>
<evidence type="ECO:0000250" key="2">
    <source>
        <dbReference type="UniProtKB" id="Q9Y4P8"/>
    </source>
</evidence>
<evidence type="ECO:0000305" key="3"/>